<comment type="function">
    <text evidence="1">Transport of potassium into the cell. Likely operates as a K(+):H(+) symporter.</text>
</comment>
<comment type="catalytic activity">
    <reaction evidence="1">
        <text>K(+)(in) + H(+)(in) = K(+)(out) + H(+)(out)</text>
        <dbReference type="Rhea" id="RHEA:28490"/>
        <dbReference type="ChEBI" id="CHEBI:15378"/>
        <dbReference type="ChEBI" id="CHEBI:29103"/>
    </reaction>
    <physiologicalReaction direction="right-to-left" evidence="1">
        <dbReference type="Rhea" id="RHEA:28492"/>
    </physiologicalReaction>
</comment>
<comment type="subcellular location">
    <subcellularLocation>
        <location evidence="1">Cell membrane</location>
        <topology evidence="1">Multi-pass membrane protein</topology>
    </subcellularLocation>
</comment>
<comment type="similarity">
    <text evidence="1">Belongs to the HAK/KUP transporter (TC 2.A.72) family.</text>
</comment>
<keyword id="KW-1003">Cell membrane</keyword>
<keyword id="KW-0406">Ion transport</keyword>
<keyword id="KW-0472">Membrane</keyword>
<keyword id="KW-0630">Potassium</keyword>
<keyword id="KW-0633">Potassium transport</keyword>
<keyword id="KW-0769">Symport</keyword>
<keyword id="KW-0812">Transmembrane</keyword>
<keyword id="KW-1133">Transmembrane helix</keyword>
<keyword id="KW-0813">Transport</keyword>
<evidence type="ECO:0000255" key="1">
    <source>
        <dbReference type="HAMAP-Rule" id="MF_01522"/>
    </source>
</evidence>
<sequence length="666" mass="74847">MSDSHLTAFDKASKAGFIIALGIVYGDIGTSPLYTMQSLVENQGGVNQVSESFILGSISLIIWTLTLITTIKYVLIALKADNHHEGGIFSLFTLVRKMSPWLIIPAMIGGATLLSDGALTPAVTVTSAIEGLKAVPGLSHIYQNQTNVIITTLVILIVLFGIQRFGTGFIGKIFGPVMFIWFSFLGVSGFFNTLGHLEIFKAINPYYALHLLFSPENHRGIFILGSIFLATTGAEALYSDLGHVGRGNIYVSWPFVKVCIVLSYCGQAAWILANKHSGIELNPFFASVPSQLRVYLVSLATLAAIIASQALISGSFTLVSEAMRLKIFPLFRVTYPGANLGQLYIPVINWILFAVTSCTVLYFRTSAHMEAAYGLAITITMLMTTILLNYYLIKEGVKPFLAHLVMTFFALVEFIFFWASAVKFMHGGYVVVILALAIVFVMFIWHAGTRIVFKYVKSLNLNDYKEQIKQLRDDVCFDLYQTNVVYLSNRMQDYMIDRSILYSILDKRPKRARVYWFVNVQVTDEPYTAKYKVDMMGTDYMVRVNLYLGFRMPQTVPRYLRTIVQDLMESGRLPKQEQEYTITPGRDVGDFRFVLIEERVSNARQLSNFERFIMQTKASIKHVTASPMRWFGLQYSEVTLEVVPLILSDVLKLPIKELVPVEDSEA</sequence>
<name>KUP_STRP6</name>
<gene>
    <name evidence="1" type="primary">kup</name>
    <name type="ordered locus">M6_Spy1179</name>
</gene>
<organism>
    <name type="scientific">Streptococcus pyogenes serotype M6 (strain ATCC BAA-946 / MGAS10394)</name>
    <dbReference type="NCBI Taxonomy" id="286636"/>
    <lineage>
        <taxon>Bacteria</taxon>
        <taxon>Bacillati</taxon>
        <taxon>Bacillota</taxon>
        <taxon>Bacilli</taxon>
        <taxon>Lactobacillales</taxon>
        <taxon>Streptococcaceae</taxon>
        <taxon>Streptococcus</taxon>
    </lineage>
</organism>
<dbReference type="EMBL" id="CP000003">
    <property type="protein sequence ID" value="AAT87314.1"/>
    <property type="molecule type" value="Genomic_DNA"/>
</dbReference>
<dbReference type="RefSeq" id="WP_011184719.1">
    <property type="nucleotide sequence ID" value="NC_006086.1"/>
</dbReference>
<dbReference type="KEGG" id="spa:M6_Spy1179"/>
<dbReference type="HOGENOM" id="CLU_008142_4_1_9"/>
<dbReference type="Proteomes" id="UP000001167">
    <property type="component" value="Chromosome"/>
</dbReference>
<dbReference type="GO" id="GO:0005886">
    <property type="term" value="C:plasma membrane"/>
    <property type="evidence" value="ECO:0007669"/>
    <property type="project" value="UniProtKB-SubCell"/>
</dbReference>
<dbReference type="GO" id="GO:0015079">
    <property type="term" value="F:potassium ion transmembrane transporter activity"/>
    <property type="evidence" value="ECO:0007669"/>
    <property type="project" value="UniProtKB-UniRule"/>
</dbReference>
<dbReference type="GO" id="GO:0015293">
    <property type="term" value="F:symporter activity"/>
    <property type="evidence" value="ECO:0007669"/>
    <property type="project" value="UniProtKB-UniRule"/>
</dbReference>
<dbReference type="HAMAP" id="MF_01522">
    <property type="entry name" value="Kup"/>
    <property type="match status" value="1"/>
</dbReference>
<dbReference type="InterPro" id="IPR003855">
    <property type="entry name" value="K+_transporter"/>
</dbReference>
<dbReference type="InterPro" id="IPR053952">
    <property type="entry name" value="K_trans_C"/>
</dbReference>
<dbReference type="InterPro" id="IPR053951">
    <property type="entry name" value="K_trans_N"/>
</dbReference>
<dbReference type="InterPro" id="IPR023051">
    <property type="entry name" value="Kup"/>
</dbReference>
<dbReference type="PANTHER" id="PTHR30540:SF83">
    <property type="entry name" value="K+ POTASSIUM TRANSPORTER"/>
    <property type="match status" value="1"/>
</dbReference>
<dbReference type="PANTHER" id="PTHR30540">
    <property type="entry name" value="OSMOTIC STRESS POTASSIUM TRANSPORTER"/>
    <property type="match status" value="1"/>
</dbReference>
<dbReference type="Pfam" id="PF02705">
    <property type="entry name" value="K_trans"/>
    <property type="match status" value="1"/>
</dbReference>
<dbReference type="Pfam" id="PF22776">
    <property type="entry name" value="K_trans_C"/>
    <property type="match status" value="1"/>
</dbReference>
<protein>
    <recommendedName>
        <fullName evidence="1">Probable potassium transport system protein Kup</fullName>
    </recommendedName>
</protein>
<reference key="1">
    <citation type="journal article" date="2004" name="J. Infect. Dis.">
        <title>Progress toward characterization of the group A Streptococcus metagenome: complete genome sequence of a macrolide-resistant serotype M6 strain.</title>
        <authorList>
            <person name="Banks D.J."/>
            <person name="Porcella S.F."/>
            <person name="Barbian K.D."/>
            <person name="Beres S.B."/>
            <person name="Philips L.E."/>
            <person name="Voyich J.M."/>
            <person name="DeLeo F.R."/>
            <person name="Martin J.M."/>
            <person name="Somerville G.A."/>
            <person name="Musser J.M."/>
        </authorList>
    </citation>
    <scope>NUCLEOTIDE SEQUENCE [LARGE SCALE GENOMIC DNA]</scope>
    <source>
        <strain>ATCC BAA-946 / MGAS10394</strain>
    </source>
</reference>
<accession>Q5XB99</accession>
<proteinExistence type="inferred from homology"/>
<feature type="chain" id="PRO_0000209063" description="Probable potassium transport system protein Kup">
    <location>
        <begin position="1"/>
        <end position="666"/>
    </location>
</feature>
<feature type="transmembrane region" description="Helical" evidence="1">
    <location>
        <begin position="16"/>
        <end position="36"/>
    </location>
</feature>
<feature type="transmembrane region" description="Helical" evidence="1">
    <location>
        <begin position="58"/>
        <end position="78"/>
    </location>
</feature>
<feature type="transmembrane region" description="Helical" evidence="1">
    <location>
        <begin position="100"/>
        <end position="120"/>
    </location>
</feature>
<feature type="transmembrane region" description="Helical" evidence="1">
    <location>
        <begin position="141"/>
        <end position="161"/>
    </location>
</feature>
<feature type="transmembrane region" description="Helical" evidence="1">
    <location>
        <begin position="165"/>
        <end position="185"/>
    </location>
</feature>
<feature type="transmembrane region" description="Helical" evidence="1">
    <location>
        <begin position="221"/>
        <end position="241"/>
    </location>
</feature>
<feature type="transmembrane region" description="Helical" evidence="1">
    <location>
        <begin position="253"/>
        <end position="273"/>
    </location>
</feature>
<feature type="transmembrane region" description="Helical" evidence="1">
    <location>
        <begin position="294"/>
        <end position="314"/>
    </location>
</feature>
<feature type="transmembrane region" description="Helical" evidence="1">
    <location>
        <begin position="343"/>
        <end position="363"/>
    </location>
</feature>
<feature type="transmembrane region" description="Helical" evidence="1">
    <location>
        <begin position="373"/>
        <end position="393"/>
    </location>
</feature>
<feature type="transmembrane region" description="Helical" evidence="1">
    <location>
        <begin position="399"/>
        <end position="419"/>
    </location>
</feature>
<feature type="transmembrane region" description="Helical" evidence="1">
    <location>
        <begin position="424"/>
        <end position="444"/>
    </location>
</feature>